<evidence type="ECO:0000255" key="1">
    <source>
        <dbReference type="HAMAP-Rule" id="MF_01221"/>
    </source>
</evidence>
<organism>
    <name type="scientific">Streptococcus sanguinis (strain SK36)</name>
    <dbReference type="NCBI Taxonomy" id="388919"/>
    <lineage>
        <taxon>Bacteria</taxon>
        <taxon>Bacillati</taxon>
        <taxon>Bacillota</taxon>
        <taxon>Bacilli</taxon>
        <taxon>Lactobacillales</taxon>
        <taxon>Streptococcaceae</taxon>
        <taxon>Streptococcus</taxon>
    </lineage>
</organism>
<name>Y2018_STRSV</name>
<sequence length="445" mass="46457">MDIRQVTETIAMIEEQNFDIRTITMGISLLDCIDTDIDWAAEKIYKKITTKAKDLVAVGDEIAAELGIPIVNKRVSVTPISLIGAATDSRDYVPLAKALDKAAKEIGVDFIGGFSALVQKGYQKGDEILINSIPRALAETDKVCSSVNIGSTKTGINMTAVADMGRIIKETAQLSDMGAAKLVVFANAVEDNPFMAGAFHGVGEADVVINVGVSGPGVVKRALEKVRGESFDVVAETVKKTAFKITRIGQLVGQMASECLGVKFGIVDLSLAPTPAVGDSVARVLEEMGLETVGTHGTTAALALLNDQVKKGGVMACNQVGGLSGAFIPVSEDEGMIAAVQNGSLNLEKLEAMTAICSVGLDMIAIPEATPAETIAAMIADEAAIGVINQKTTAVRIIPKGKEGDMIEFGELLGTAPVMKVNQASSAAFIARGGQIPAPIHSFKN</sequence>
<feature type="chain" id="PRO_1000066777" description="UPF0210 protein SSA_2018">
    <location>
        <begin position="1"/>
        <end position="445"/>
    </location>
</feature>
<dbReference type="EMBL" id="CP000387">
    <property type="protein sequence ID" value="ABN45388.1"/>
    <property type="molecule type" value="Genomic_DNA"/>
</dbReference>
<dbReference type="RefSeq" id="WP_011837498.1">
    <property type="nucleotide sequence ID" value="NC_009009.1"/>
</dbReference>
<dbReference type="RefSeq" id="YP_001035938.1">
    <property type="nucleotide sequence ID" value="NC_009009.1"/>
</dbReference>
<dbReference type="SMR" id="A3CQD3"/>
<dbReference type="STRING" id="388919.SSA_2018"/>
<dbReference type="KEGG" id="ssa:SSA_2018"/>
<dbReference type="PATRIC" id="fig|388919.9.peg.1913"/>
<dbReference type="eggNOG" id="COG2848">
    <property type="taxonomic scope" value="Bacteria"/>
</dbReference>
<dbReference type="HOGENOM" id="CLU_048704_0_0_9"/>
<dbReference type="OrthoDB" id="9763001at2"/>
<dbReference type="Proteomes" id="UP000002148">
    <property type="component" value="Chromosome"/>
</dbReference>
<dbReference type="CDD" id="cd08025">
    <property type="entry name" value="RNR_PFL_like_DUF711"/>
    <property type="match status" value="1"/>
</dbReference>
<dbReference type="Gene3D" id="3.20.70.20">
    <property type="match status" value="1"/>
</dbReference>
<dbReference type="HAMAP" id="MF_01221">
    <property type="entry name" value="UPF0210"/>
    <property type="match status" value="1"/>
</dbReference>
<dbReference type="InterPro" id="IPR007841">
    <property type="entry name" value="UPF0210"/>
</dbReference>
<dbReference type="NCBIfam" id="NF003700">
    <property type="entry name" value="PRK05313.1"/>
    <property type="match status" value="1"/>
</dbReference>
<dbReference type="PANTHER" id="PTHR37560:SF1">
    <property type="entry name" value="UPF0210 PROTEIN MJ1665"/>
    <property type="match status" value="1"/>
</dbReference>
<dbReference type="PANTHER" id="PTHR37560">
    <property type="entry name" value="UPF0210 PROTEIN SPR0218"/>
    <property type="match status" value="1"/>
</dbReference>
<dbReference type="Pfam" id="PF05167">
    <property type="entry name" value="DUF711"/>
    <property type="match status" value="1"/>
</dbReference>
<dbReference type="SUPFAM" id="SSF51998">
    <property type="entry name" value="PFL-like glycyl radical enzymes"/>
    <property type="match status" value="1"/>
</dbReference>
<comment type="subunit">
    <text evidence="1">Homodimer.</text>
</comment>
<comment type="similarity">
    <text evidence="1">Belongs to the UPF0210 family.</text>
</comment>
<gene>
    <name type="ordered locus">SSA_2018</name>
</gene>
<keyword id="KW-1185">Reference proteome</keyword>
<proteinExistence type="inferred from homology"/>
<protein>
    <recommendedName>
        <fullName evidence="1">UPF0210 protein SSA_2018</fullName>
    </recommendedName>
</protein>
<reference key="1">
    <citation type="journal article" date="2007" name="J. Bacteriol.">
        <title>Genome of the opportunistic pathogen Streptococcus sanguinis.</title>
        <authorList>
            <person name="Xu P."/>
            <person name="Alves J.M."/>
            <person name="Kitten T."/>
            <person name="Brown A."/>
            <person name="Chen Z."/>
            <person name="Ozaki L.S."/>
            <person name="Manque P."/>
            <person name="Ge X."/>
            <person name="Serrano M.G."/>
            <person name="Puiu D."/>
            <person name="Hendricks S."/>
            <person name="Wang Y."/>
            <person name="Chaplin M.D."/>
            <person name="Akan D."/>
            <person name="Paik S."/>
            <person name="Peterson D.L."/>
            <person name="Macrina F.L."/>
            <person name="Buck G.A."/>
        </authorList>
    </citation>
    <scope>NUCLEOTIDE SEQUENCE [LARGE SCALE GENOMIC DNA]</scope>
    <source>
        <strain>SK36</strain>
    </source>
</reference>
<accession>A3CQD3</accession>